<proteinExistence type="inferred from homology"/>
<feature type="chain" id="PRO_0000111675" description="Ribonuclease HIII">
    <location>
        <begin position="1"/>
        <end position="311"/>
    </location>
</feature>
<feature type="domain" description="RNase H type-2" evidence="2">
    <location>
        <begin position="95"/>
        <end position="311"/>
    </location>
</feature>
<feature type="binding site" evidence="1">
    <location>
        <position position="101"/>
    </location>
    <ligand>
        <name>a divalent metal cation</name>
        <dbReference type="ChEBI" id="CHEBI:60240"/>
    </ligand>
</feature>
<feature type="binding site" evidence="1">
    <location>
        <position position="102"/>
    </location>
    <ligand>
        <name>a divalent metal cation</name>
        <dbReference type="ChEBI" id="CHEBI:60240"/>
    </ligand>
</feature>
<feature type="binding site" evidence="1">
    <location>
        <position position="206"/>
    </location>
    <ligand>
        <name>a divalent metal cation</name>
        <dbReference type="ChEBI" id="CHEBI:60240"/>
    </ligand>
</feature>
<organism>
    <name type="scientific">Bacillus anthracis</name>
    <dbReference type="NCBI Taxonomy" id="1392"/>
    <lineage>
        <taxon>Bacteria</taxon>
        <taxon>Bacillati</taxon>
        <taxon>Bacillota</taxon>
        <taxon>Bacilli</taxon>
        <taxon>Bacillales</taxon>
        <taxon>Bacillaceae</taxon>
        <taxon>Bacillus</taxon>
        <taxon>Bacillus cereus group</taxon>
    </lineage>
</organism>
<sequence>MSNSIVIQTNSTVIEDMKQQYKHSLSPKTPQGGIFMAKVPSCTITAYKSGKVMFQGGRAEAEAARWQTVPQTPKIAVKKSVDSHRYAPPASIGTMSIVGSDEVGTGDFFGPMTVVAVYVDAKQIPLLKELGVKDSKNLNDEQITAIAKQLLHVVPYSSLVLHNEKYNELFDKGNNQGKLKALLHNKAITNLLAKIAPTKPEGVLIDQFTQPDTYYKYLAKQKQVQRENVYFATKGESVHLAVAAASILARYSFVKQFNELSKKAGMPLPKGAGKQVDIAAAKLIQKLGKERLPEFVKLHFANTEKAFRLLK</sequence>
<gene>
    <name evidence="1" type="primary">rnhC</name>
    <name type="ordered locus">BA_4798</name>
    <name type="ordered locus">GBAA_4798</name>
    <name type="ordered locus">BAS4451</name>
</gene>
<comment type="function">
    <text evidence="1">Endonuclease that specifically degrades the RNA of RNA-DNA hybrids.</text>
</comment>
<comment type="catalytic activity">
    <reaction evidence="1">
        <text>Endonucleolytic cleavage to 5'-phosphomonoester.</text>
        <dbReference type="EC" id="3.1.26.4"/>
    </reaction>
</comment>
<comment type="cofactor">
    <cofactor evidence="1">
        <name>Mn(2+)</name>
        <dbReference type="ChEBI" id="CHEBI:29035"/>
    </cofactor>
    <cofactor evidence="1">
        <name>Mg(2+)</name>
        <dbReference type="ChEBI" id="CHEBI:18420"/>
    </cofactor>
    <text evidence="1">Manganese or magnesium. Binds 1 divalent metal ion per monomer in the absence of substrate. May bind a second metal ion after substrate binding.</text>
</comment>
<comment type="subcellular location">
    <subcellularLocation>
        <location evidence="1">Cytoplasm</location>
    </subcellularLocation>
</comment>
<comment type="similarity">
    <text evidence="1">Belongs to the RNase HII family. RnhC subfamily.</text>
</comment>
<evidence type="ECO:0000255" key="1">
    <source>
        <dbReference type="HAMAP-Rule" id="MF_00053"/>
    </source>
</evidence>
<evidence type="ECO:0000255" key="2">
    <source>
        <dbReference type="PROSITE-ProRule" id="PRU01319"/>
    </source>
</evidence>
<reference key="1">
    <citation type="journal article" date="2003" name="Nature">
        <title>The genome sequence of Bacillus anthracis Ames and comparison to closely related bacteria.</title>
        <authorList>
            <person name="Read T.D."/>
            <person name="Peterson S.N."/>
            <person name="Tourasse N.J."/>
            <person name="Baillie L.W."/>
            <person name="Paulsen I.T."/>
            <person name="Nelson K.E."/>
            <person name="Tettelin H."/>
            <person name="Fouts D.E."/>
            <person name="Eisen J.A."/>
            <person name="Gill S.R."/>
            <person name="Holtzapple E.K."/>
            <person name="Okstad O.A."/>
            <person name="Helgason E."/>
            <person name="Rilstone J."/>
            <person name="Wu M."/>
            <person name="Kolonay J.F."/>
            <person name="Beanan M.J."/>
            <person name="Dodson R.J."/>
            <person name="Brinkac L.M."/>
            <person name="Gwinn M.L."/>
            <person name="DeBoy R.T."/>
            <person name="Madpu R."/>
            <person name="Daugherty S.C."/>
            <person name="Durkin A.S."/>
            <person name="Haft D.H."/>
            <person name="Nelson W.C."/>
            <person name="Peterson J.D."/>
            <person name="Pop M."/>
            <person name="Khouri H.M."/>
            <person name="Radune D."/>
            <person name="Benton J.L."/>
            <person name="Mahamoud Y."/>
            <person name="Jiang L."/>
            <person name="Hance I.R."/>
            <person name="Weidman J.F."/>
            <person name="Berry K.J."/>
            <person name="Plaut R.D."/>
            <person name="Wolf A.M."/>
            <person name="Watkins K.L."/>
            <person name="Nierman W.C."/>
            <person name="Hazen A."/>
            <person name="Cline R.T."/>
            <person name="Redmond C."/>
            <person name="Thwaite J.E."/>
            <person name="White O."/>
            <person name="Salzberg S.L."/>
            <person name="Thomason B."/>
            <person name="Friedlander A.M."/>
            <person name="Koehler T.M."/>
            <person name="Hanna P.C."/>
            <person name="Kolstoe A.-B."/>
            <person name="Fraser C.M."/>
        </authorList>
    </citation>
    <scope>NUCLEOTIDE SEQUENCE [LARGE SCALE GENOMIC DNA]</scope>
    <source>
        <strain>Ames / isolate Porton</strain>
    </source>
</reference>
<reference key="2">
    <citation type="journal article" date="2009" name="J. Bacteriol.">
        <title>The complete genome sequence of Bacillus anthracis Ames 'Ancestor'.</title>
        <authorList>
            <person name="Ravel J."/>
            <person name="Jiang L."/>
            <person name="Stanley S.T."/>
            <person name="Wilson M.R."/>
            <person name="Decker R.S."/>
            <person name="Read T.D."/>
            <person name="Worsham P."/>
            <person name="Keim P.S."/>
            <person name="Salzberg S.L."/>
            <person name="Fraser-Liggett C.M."/>
            <person name="Rasko D.A."/>
        </authorList>
    </citation>
    <scope>NUCLEOTIDE SEQUENCE [LARGE SCALE GENOMIC DNA]</scope>
    <source>
        <strain>Ames ancestor</strain>
    </source>
</reference>
<reference key="3">
    <citation type="submission" date="2004-01" db="EMBL/GenBank/DDBJ databases">
        <title>Complete genome sequence of Bacillus anthracis Sterne.</title>
        <authorList>
            <person name="Brettin T.S."/>
            <person name="Bruce D."/>
            <person name="Challacombe J.F."/>
            <person name="Gilna P."/>
            <person name="Han C."/>
            <person name="Hill K."/>
            <person name="Hitchcock P."/>
            <person name="Jackson P."/>
            <person name="Keim P."/>
            <person name="Longmire J."/>
            <person name="Lucas S."/>
            <person name="Okinaka R."/>
            <person name="Richardson P."/>
            <person name="Rubin E."/>
            <person name="Tice H."/>
        </authorList>
    </citation>
    <scope>NUCLEOTIDE SEQUENCE [LARGE SCALE GENOMIC DNA]</scope>
    <source>
        <strain>Sterne</strain>
    </source>
</reference>
<protein>
    <recommendedName>
        <fullName evidence="1">Ribonuclease HIII</fullName>
        <shortName evidence="1">RNase HIII</shortName>
        <ecNumber evidence="1">3.1.26.4</ecNumber>
    </recommendedName>
</protein>
<keyword id="KW-0963">Cytoplasm</keyword>
<keyword id="KW-0255">Endonuclease</keyword>
<keyword id="KW-0378">Hydrolase</keyword>
<keyword id="KW-0460">Magnesium</keyword>
<keyword id="KW-0479">Metal-binding</keyword>
<keyword id="KW-0540">Nuclease</keyword>
<keyword id="KW-1185">Reference proteome</keyword>
<dbReference type="EC" id="3.1.26.4" evidence="1"/>
<dbReference type="EMBL" id="AE016879">
    <property type="protein sequence ID" value="AAP28487.1"/>
    <property type="molecule type" value="Genomic_DNA"/>
</dbReference>
<dbReference type="EMBL" id="AE017334">
    <property type="protein sequence ID" value="AAT33919.1"/>
    <property type="molecule type" value="Genomic_DNA"/>
</dbReference>
<dbReference type="EMBL" id="AE017225">
    <property type="protein sequence ID" value="AAT56749.1"/>
    <property type="molecule type" value="Genomic_DNA"/>
</dbReference>
<dbReference type="RefSeq" id="NP_847001.1">
    <property type="nucleotide sequence ID" value="NC_003997.3"/>
</dbReference>
<dbReference type="RefSeq" id="WP_000071578.1">
    <property type="nucleotide sequence ID" value="NZ_WXXJ01000026.1"/>
</dbReference>
<dbReference type="RefSeq" id="YP_030698.1">
    <property type="nucleotide sequence ID" value="NC_005945.1"/>
</dbReference>
<dbReference type="SMR" id="Q81L36"/>
<dbReference type="STRING" id="261594.GBAA_4798"/>
<dbReference type="DNASU" id="1083923"/>
<dbReference type="GeneID" id="45024427"/>
<dbReference type="KEGG" id="ban:BA_4798"/>
<dbReference type="KEGG" id="bar:GBAA_4798"/>
<dbReference type="KEGG" id="bat:BAS4451"/>
<dbReference type="PATRIC" id="fig|198094.11.peg.4759"/>
<dbReference type="eggNOG" id="COG1039">
    <property type="taxonomic scope" value="Bacteria"/>
</dbReference>
<dbReference type="HOGENOM" id="CLU_059546_1_0_9"/>
<dbReference type="OMA" id="GCTITAY"/>
<dbReference type="OrthoDB" id="9777935at2"/>
<dbReference type="Proteomes" id="UP000000427">
    <property type="component" value="Chromosome"/>
</dbReference>
<dbReference type="Proteomes" id="UP000000594">
    <property type="component" value="Chromosome"/>
</dbReference>
<dbReference type="GO" id="GO:0005737">
    <property type="term" value="C:cytoplasm"/>
    <property type="evidence" value="ECO:0007669"/>
    <property type="project" value="UniProtKB-SubCell"/>
</dbReference>
<dbReference type="GO" id="GO:0032299">
    <property type="term" value="C:ribonuclease H2 complex"/>
    <property type="evidence" value="ECO:0007669"/>
    <property type="project" value="TreeGrafter"/>
</dbReference>
<dbReference type="GO" id="GO:0000287">
    <property type="term" value="F:magnesium ion binding"/>
    <property type="evidence" value="ECO:0007669"/>
    <property type="project" value="UniProtKB-UniRule"/>
</dbReference>
<dbReference type="GO" id="GO:0003723">
    <property type="term" value="F:RNA binding"/>
    <property type="evidence" value="ECO:0007669"/>
    <property type="project" value="InterPro"/>
</dbReference>
<dbReference type="GO" id="GO:0004523">
    <property type="term" value="F:RNA-DNA hybrid ribonuclease activity"/>
    <property type="evidence" value="ECO:0007669"/>
    <property type="project" value="UniProtKB-UniRule"/>
</dbReference>
<dbReference type="GO" id="GO:0043137">
    <property type="term" value="P:DNA replication, removal of RNA primer"/>
    <property type="evidence" value="ECO:0007669"/>
    <property type="project" value="TreeGrafter"/>
</dbReference>
<dbReference type="GO" id="GO:0006298">
    <property type="term" value="P:mismatch repair"/>
    <property type="evidence" value="ECO:0007669"/>
    <property type="project" value="TreeGrafter"/>
</dbReference>
<dbReference type="CDD" id="cd06590">
    <property type="entry name" value="RNase_HII_bacteria_HIII_like"/>
    <property type="match status" value="1"/>
</dbReference>
<dbReference type="CDD" id="cd14796">
    <property type="entry name" value="RNAse_HIII_N"/>
    <property type="match status" value="1"/>
</dbReference>
<dbReference type="FunFam" id="3.30.310.10:FF:000016">
    <property type="entry name" value="Ribonuclease HIII"/>
    <property type="match status" value="1"/>
</dbReference>
<dbReference type="FunFam" id="3.30.420.10:FF:000047">
    <property type="entry name" value="Ribonuclease HIII"/>
    <property type="match status" value="1"/>
</dbReference>
<dbReference type="Gene3D" id="3.30.420.10">
    <property type="entry name" value="Ribonuclease H-like superfamily/Ribonuclease H"/>
    <property type="match status" value="1"/>
</dbReference>
<dbReference type="Gene3D" id="3.30.310.10">
    <property type="entry name" value="TATA-Binding Protein"/>
    <property type="match status" value="1"/>
</dbReference>
<dbReference type="HAMAP" id="MF_00053">
    <property type="entry name" value="RNase_HIII"/>
    <property type="match status" value="1"/>
</dbReference>
<dbReference type="InterPro" id="IPR001352">
    <property type="entry name" value="RNase_HII/HIII"/>
</dbReference>
<dbReference type="InterPro" id="IPR024567">
    <property type="entry name" value="RNase_HII/HIII_dom"/>
</dbReference>
<dbReference type="InterPro" id="IPR004641">
    <property type="entry name" value="RNase_HIII"/>
</dbReference>
<dbReference type="InterPro" id="IPR024568">
    <property type="entry name" value="RNase_HIII_N"/>
</dbReference>
<dbReference type="InterPro" id="IPR012337">
    <property type="entry name" value="RNaseH-like_sf"/>
</dbReference>
<dbReference type="InterPro" id="IPR036397">
    <property type="entry name" value="RNaseH_sf"/>
</dbReference>
<dbReference type="InterPro" id="IPR012295">
    <property type="entry name" value="TBP_dom_sf"/>
</dbReference>
<dbReference type="NCBIfam" id="TIGR00716">
    <property type="entry name" value="rnhC"/>
    <property type="match status" value="1"/>
</dbReference>
<dbReference type="PANTHER" id="PTHR10954:SF23">
    <property type="entry name" value="RIBONUCLEASE"/>
    <property type="match status" value="1"/>
</dbReference>
<dbReference type="PANTHER" id="PTHR10954">
    <property type="entry name" value="RIBONUCLEASE H2 SUBUNIT A"/>
    <property type="match status" value="1"/>
</dbReference>
<dbReference type="Pfam" id="PF11858">
    <property type="entry name" value="DUF3378"/>
    <property type="match status" value="1"/>
</dbReference>
<dbReference type="Pfam" id="PF01351">
    <property type="entry name" value="RNase_HII"/>
    <property type="match status" value="1"/>
</dbReference>
<dbReference type="PIRSF" id="PIRSF037748">
    <property type="entry name" value="RnhC"/>
    <property type="match status" value="1"/>
</dbReference>
<dbReference type="SUPFAM" id="SSF53098">
    <property type="entry name" value="Ribonuclease H-like"/>
    <property type="match status" value="1"/>
</dbReference>
<dbReference type="PROSITE" id="PS51975">
    <property type="entry name" value="RNASE_H_2"/>
    <property type="match status" value="1"/>
</dbReference>
<accession>Q81L36</accession>
<accession>Q6HSJ0</accession>
<accession>Q6KLT5</accession>
<name>RNH3_BACAN</name>